<proteinExistence type="inferred from homology"/>
<feature type="chain" id="PRO_0000111110" description="Small ribosomal subunit protein bS18">
    <location>
        <begin position="1"/>
        <end position="77"/>
    </location>
</feature>
<reference key="1">
    <citation type="journal article" date="2003" name="Nature">
        <title>Genome sequence of Bacillus cereus and comparative analysis with Bacillus anthracis.</title>
        <authorList>
            <person name="Ivanova N."/>
            <person name="Sorokin A."/>
            <person name="Anderson I."/>
            <person name="Galleron N."/>
            <person name="Candelon B."/>
            <person name="Kapatral V."/>
            <person name="Bhattacharyya A."/>
            <person name="Reznik G."/>
            <person name="Mikhailova N."/>
            <person name="Lapidus A."/>
            <person name="Chu L."/>
            <person name="Mazur M."/>
            <person name="Goltsman E."/>
            <person name="Larsen N."/>
            <person name="D'Souza M."/>
            <person name="Walunas T."/>
            <person name="Grechkin Y."/>
            <person name="Pusch G."/>
            <person name="Haselkorn R."/>
            <person name="Fonstein M."/>
            <person name="Ehrlich S.D."/>
            <person name="Overbeek R."/>
            <person name="Kyrpides N.C."/>
        </authorList>
    </citation>
    <scope>NUCLEOTIDE SEQUENCE [LARGE SCALE GENOMIC DNA]</scope>
    <source>
        <strain>ATCC 14579 / DSM 31 / CCUG 7414 / JCM 2152 / NBRC 15305 / NCIMB 9373 / NCTC 2599 / NRRL B-3711</strain>
    </source>
</reference>
<organism>
    <name type="scientific">Bacillus cereus (strain ATCC 14579 / DSM 31 / CCUG 7414 / JCM 2152 / NBRC 15305 / NCIMB 9373 / NCTC 2599 / NRRL B-3711)</name>
    <dbReference type="NCBI Taxonomy" id="226900"/>
    <lineage>
        <taxon>Bacteria</taxon>
        <taxon>Bacillati</taxon>
        <taxon>Bacillota</taxon>
        <taxon>Bacilli</taxon>
        <taxon>Bacillales</taxon>
        <taxon>Bacillaceae</taxon>
        <taxon>Bacillus</taxon>
        <taxon>Bacillus cereus group</taxon>
    </lineage>
</organism>
<dbReference type="EMBL" id="AE016877">
    <property type="protein sequence ID" value="AAP12328.1"/>
    <property type="molecule type" value="Genomic_DNA"/>
</dbReference>
<dbReference type="RefSeq" id="NP_835127.1">
    <property type="nucleotide sequence ID" value="NC_004722.1"/>
</dbReference>
<dbReference type="RefSeq" id="WP_000918873.1">
    <property type="nucleotide sequence ID" value="NZ_CP138336.1"/>
</dbReference>
<dbReference type="SMR" id="Q814G7"/>
<dbReference type="STRING" id="226900.BC_5474"/>
<dbReference type="MetOSite" id="Q814G7"/>
<dbReference type="GeneID" id="93005650"/>
<dbReference type="KEGG" id="bce:BC5474"/>
<dbReference type="PATRIC" id="fig|226900.8.peg.5652"/>
<dbReference type="HOGENOM" id="CLU_148710_2_2_9"/>
<dbReference type="OrthoDB" id="9812008at2"/>
<dbReference type="Proteomes" id="UP000001417">
    <property type="component" value="Chromosome"/>
</dbReference>
<dbReference type="GO" id="GO:0022627">
    <property type="term" value="C:cytosolic small ribosomal subunit"/>
    <property type="evidence" value="ECO:0000318"/>
    <property type="project" value="GO_Central"/>
</dbReference>
<dbReference type="GO" id="GO:0070181">
    <property type="term" value="F:small ribosomal subunit rRNA binding"/>
    <property type="evidence" value="ECO:0000318"/>
    <property type="project" value="GO_Central"/>
</dbReference>
<dbReference type="GO" id="GO:0003735">
    <property type="term" value="F:structural constituent of ribosome"/>
    <property type="evidence" value="ECO:0000318"/>
    <property type="project" value="GO_Central"/>
</dbReference>
<dbReference type="GO" id="GO:0006412">
    <property type="term" value="P:translation"/>
    <property type="evidence" value="ECO:0000318"/>
    <property type="project" value="GO_Central"/>
</dbReference>
<dbReference type="FunFam" id="4.10.640.10:FF:000003">
    <property type="entry name" value="30S ribosomal protein S18"/>
    <property type="match status" value="1"/>
</dbReference>
<dbReference type="Gene3D" id="4.10.640.10">
    <property type="entry name" value="Ribosomal protein S18"/>
    <property type="match status" value="1"/>
</dbReference>
<dbReference type="HAMAP" id="MF_00270">
    <property type="entry name" value="Ribosomal_bS18"/>
    <property type="match status" value="1"/>
</dbReference>
<dbReference type="InterPro" id="IPR001648">
    <property type="entry name" value="Ribosomal_bS18"/>
</dbReference>
<dbReference type="InterPro" id="IPR018275">
    <property type="entry name" value="Ribosomal_bS18_CS"/>
</dbReference>
<dbReference type="InterPro" id="IPR036870">
    <property type="entry name" value="Ribosomal_bS18_sf"/>
</dbReference>
<dbReference type="NCBIfam" id="TIGR00165">
    <property type="entry name" value="S18"/>
    <property type="match status" value="1"/>
</dbReference>
<dbReference type="PANTHER" id="PTHR13479">
    <property type="entry name" value="30S RIBOSOMAL PROTEIN S18"/>
    <property type="match status" value="1"/>
</dbReference>
<dbReference type="PANTHER" id="PTHR13479:SF40">
    <property type="entry name" value="SMALL RIBOSOMAL SUBUNIT PROTEIN BS18M"/>
    <property type="match status" value="1"/>
</dbReference>
<dbReference type="Pfam" id="PF01084">
    <property type="entry name" value="Ribosomal_S18"/>
    <property type="match status" value="1"/>
</dbReference>
<dbReference type="PRINTS" id="PR00974">
    <property type="entry name" value="RIBOSOMALS18"/>
</dbReference>
<dbReference type="SUPFAM" id="SSF46911">
    <property type="entry name" value="Ribosomal protein S18"/>
    <property type="match status" value="1"/>
</dbReference>
<dbReference type="PROSITE" id="PS00057">
    <property type="entry name" value="RIBOSOMAL_S18"/>
    <property type="match status" value="1"/>
</dbReference>
<gene>
    <name evidence="1" type="primary">rpsR</name>
    <name type="ordered locus">BC_5474</name>
</gene>
<sequence>MAGRKGGRAKRRKVCFFTANGITRIDYKDVDLLKRFVSERGKILPRRVTGTSAKYQRKLTVAIKRARQMALLPYVGE</sequence>
<keyword id="KW-1185">Reference proteome</keyword>
<keyword id="KW-0687">Ribonucleoprotein</keyword>
<keyword id="KW-0689">Ribosomal protein</keyword>
<keyword id="KW-0694">RNA-binding</keyword>
<keyword id="KW-0699">rRNA-binding</keyword>
<protein>
    <recommendedName>
        <fullName evidence="1">Small ribosomal subunit protein bS18</fullName>
    </recommendedName>
    <alternativeName>
        <fullName evidence="2">30S ribosomal protein S18</fullName>
    </alternativeName>
</protein>
<accession>Q814G7</accession>
<evidence type="ECO:0000255" key="1">
    <source>
        <dbReference type="HAMAP-Rule" id="MF_00270"/>
    </source>
</evidence>
<evidence type="ECO:0000305" key="2"/>
<name>RS18_BACCR</name>
<comment type="function">
    <text evidence="1">Binds as a heterodimer with protein bS6 to the central domain of the 16S rRNA, where it helps stabilize the platform of the 30S subunit.</text>
</comment>
<comment type="subunit">
    <text evidence="1">Part of the 30S ribosomal subunit. Forms a tight heterodimer with protein bS6.</text>
</comment>
<comment type="similarity">
    <text evidence="1">Belongs to the bacterial ribosomal protein bS18 family.</text>
</comment>